<dbReference type="EC" id="5.4.2.10" evidence="1"/>
<dbReference type="EMBL" id="CP000446">
    <property type="protein sequence ID" value="ABI38412.1"/>
    <property type="molecule type" value="Genomic_DNA"/>
</dbReference>
<dbReference type="RefSeq" id="WP_011622118.1">
    <property type="nucleotide sequence ID" value="NC_008321.1"/>
</dbReference>
<dbReference type="SMR" id="Q0HKK5"/>
<dbReference type="KEGG" id="she:Shewmr4_1333"/>
<dbReference type="HOGENOM" id="CLU_016950_7_0_6"/>
<dbReference type="GO" id="GO:0005829">
    <property type="term" value="C:cytosol"/>
    <property type="evidence" value="ECO:0007669"/>
    <property type="project" value="TreeGrafter"/>
</dbReference>
<dbReference type="GO" id="GO:0000287">
    <property type="term" value="F:magnesium ion binding"/>
    <property type="evidence" value="ECO:0007669"/>
    <property type="project" value="UniProtKB-UniRule"/>
</dbReference>
<dbReference type="GO" id="GO:0008966">
    <property type="term" value="F:phosphoglucosamine mutase activity"/>
    <property type="evidence" value="ECO:0007669"/>
    <property type="project" value="UniProtKB-UniRule"/>
</dbReference>
<dbReference type="GO" id="GO:0004615">
    <property type="term" value="F:phosphomannomutase activity"/>
    <property type="evidence" value="ECO:0007669"/>
    <property type="project" value="TreeGrafter"/>
</dbReference>
<dbReference type="GO" id="GO:0005975">
    <property type="term" value="P:carbohydrate metabolic process"/>
    <property type="evidence" value="ECO:0007669"/>
    <property type="project" value="InterPro"/>
</dbReference>
<dbReference type="GO" id="GO:0009252">
    <property type="term" value="P:peptidoglycan biosynthetic process"/>
    <property type="evidence" value="ECO:0007669"/>
    <property type="project" value="TreeGrafter"/>
</dbReference>
<dbReference type="GO" id="GO:0006048">
    <property type="term" value="P:UDP-N-acetylglucosamine biosynthetic process"/>
    <property type="evidence" value="ECO:0007669"/>
    <property type="project" value="TreeGrafter"/>
</dbReference>
<dbReference type="CDD" id="cd05802">
    <property type="entry name" value="GlmM"/>
    <property type="match status" value="1"/>
</dbReference>
<dbReference type="FunFam" id="3.30.310.50:FF:000001">
    <property type="entry name" value="Phosphoglucosamine mutase"/>
    <property type="match status" value="1"/>
</dbReference>
<dbReference type="FunFam" id="3.40.120.10:FF:000001">
    <property type="entry name" value="Phosphoglucosamine mutase"/>
    <property type="match status" value="1"/>
</dbReference>
<dbReference type="FunFam" id="3.40.120.10:FF:000003">
    <property type="entry name" value="Phosphoglucosamine mutase"/>
    <property type="match status" value="1"/>
</dbReference>
<dbReference type="Gene3D" id="3.40.120.10">
    <property type="entry name" value="Alpha-D-Glucose-1,6-Bisphosphate, subunit A, domain 3"/>
    <property type="match status" value="3"/>
</dbReference>
<dbReference type="Gene3D" id="3.30.310.50">
    <property type="entry name" value="Alpha-D-phosphohexomutase, C-terminal domain"/>
    <property type="match status" value="1"/>
</dbReference>
<dbReference type="HAMAP" id="MF_01554_B">
    <property type="entry name" value="GlmM_B"/>
    <property type="match status" value="1"/>
</dbReference>
<dbReference type="InterPro" id="IPR005844">
    <property type="entry name" value="A-D-PHexomutase_a/b/a-I"/>
</dbReference>
<dbReference type="InterPro" id="IPR016055">
    <property type="entry name" value="A-D-PHexomutase_a/b/a-I/II/III"/>
</dbReference>
<dbReference type="InterPro" id="IPR005845">
    <property type="entry name" value="A-D-PHexomutase_a/b/a-II"/>
</dbReference>
<dbReference type="InterPro" id="IPR005846">
    <property type="entry name" value="A-D-PHexomutase_a/b/a-III"/>
</dbReference>
<dbReference type="InterPro" id="IPR005843">
    <property type="entry name" value="A-D-PHexomutase_C"/>
</dbReference>
<dbReference type="InterPro" id="IPR036900">
    <property type="entry name" value="A-D-PHexomutase_C_sf"/>
</dbReference>
<dbReference type="InterPro" id="IPR016066">
    <property type="entry name" value="A-D-PHexomutase_CS"/>
</dbReference>
<dbReference type="InterPro" id="IPR005841">
    <property type="entry name" value="Alpha-D-phosphohexomutase_SF"/>
</dbReference>
<dbReference type="InterPro" id="IPR006352">
    <property type="entry name" value="GlmM_bact"/>
</dbReference>
<dbReference type="InterPro" id="IPR050060">
    <property type="entry name" value="Phosphoglucosamine_mutase"/>
</dbReference>
<dbReference type="NCBIfam" id="TIGR01455">
    <property type="entry name" value="glmM"/>
    <property type="match status" value="1"/>
</dbReference>
<dbReference type="NCBIfam" id="NF008139">
    <property type="entry name" value="PRK10887.1"/>
    <property type="match status" value="1"/>
</dbReference>
<dbReference type="PANTHER" id="PTHR42946:SF1">
    <property type="entry name" value="PHOSPHOGLUCOMUTASE (ALPHA-D-GLUCOSE-1,6-BISPHOSPHATE-DEPENDENT)"/>
    <property type="match status" value="1"/>
</dbReference>
<dbReference type="PANTHER" id="PTHR42946">
    <property type="entry name" value="PHOSPHOHEXOSE MUTASE"/>
    <property type="match status" value="1"/>
</dbReference>
<dbReference type="Pfam" id="PF02878">
    <property type="entry name" value="PGM_PMM_I"/>
    <property type="match status" value="1"/>
</dbReference>
<dbReference type="Pfam" id="PF02879">
    <property type="entry name" value="PGM_PMM_II"/>
    <property type="match status" value="1"/>
</dbReference>
<dbReference type="Pfam" id="PF02880">
    <property type="entry name" value="PGM_PMM_III"/>
    <property type="match status" value="1"/>
</dbReference>
<dbReference type="Pfam" id="PF00408">
    <property type="entry name" value="PGM_PMM_IV"/>
    <property type="match status" value="1"/>
</dbReference>
<dbReference type="PRINTS" id="PR00509">
    <property type="entry name" value="PGMPMM"/>
</dbReference>
<dbReference type="SUPFAM" id="SSF55957">
    <property type="entry name" value="Phosphoglucomutase, C-terminal domain"/>
    <property type="match status" value="1"/>
</dbReference>
<dbReference type="SUPFAM" id="SSF53738">
    <property type="entry name" value="Phosphoglucomutase, first 3 domains"/>
    <property type="match status" value="3"/>
</dbReference>
<dbReference type="PROSITE" id="PS00710">
    <property type="entry name" value="PGM_PMM"/>
    <property type="match status" value="1"/>
</dbReference>
<feature type="chain" id="PRO_0000305676" description="Phosphoglucosamine mutase 2">
    <location>
        <begin position="1"/>
        <end position="450"/>
    </location>
</feature>
<feature type="active site" description="Phosphoserine intermediate" evidence="1">
    <location>
        <position position="101"/>
    </location>
</feature>
<feature type="binding site" description="via phosphate group" evidence="1">
    <location>
        <position position="101"/>
    </location>
    <ligand>
        <name>Mg(2+)</name>
        <dbReference type="ChEBI" id="CHEBI:18420"/>
    </ligand>
</feature>
<feature type="binding site" evidence="1">
    <location>
        <position position="245"/>
    </location>
    <ligand>
        <name>Mg(2+)</name>
        <dbReference type="ChEBI" id="CHEBI:18420"/>
    </ligand>
</feature>
<feature type="binding site" evidence="1">
    <location>
        <position position="247"/>
    </location>
    <ligand>
        <name>Mg(2+)</name>
        <dbReference type="ChEBI" id="CHEBI:18420"/>
    </ligand>
</feature>
<feature type="binding site" evidence="1">
    <location>
        <position position="249"/>
    </location>
    <ligand>
        <name>Mg(2+)</name>
        <dbReference type="ChEBI" id="CHEBI:18420"/>
    </ligand>
</feature>
<feature type="modified residue" description="Phosphoserine" evidence="1">
    <location>
        <position position="101"/>
    </location>
</feature>
<protein>
    <recommendedName>
        <fullName evidence="1">Phosphoglucosamine mutase 2</fullName>
        <ecNumber evidence="1">5.4.2.10</ecNumber>
    </recommendedName>
</protein>
<evidence type="ECO:0000255" key="1">
    <source>
        <dbReference type="HAMAP-Rule" id="MF_01554"/>
    </source>
</evidence>
<organism>
    <name type="scientific">Shewanella sp. (strain MR-4)</name>
    <dbReference type="NCBI Taxonomy" id="60480"/>
    <lineage>
        <taxon>Bacteria</taxon>
        <taxon>Pseudomonadati</taxon>
        <taxon>Pseudomonadota</taxon>
        <taxon>Gammaproteobacteria</taxon>
        <taxon>Alteromonadales</taxon>
        <taxon>Shewanellaceae</taxon>
        <taxon>Shewanella</taxon>
    </lineage>
</organism>
<proteinExistence type="inferred from homology"/>
<sequence>MSRKYFGTDGVRGKVGTFPITPDFAMRLGWAAGTVLASTGTKEVLIGKDTRISGYMLESAMEAGFSAAGVNVALIGPMPTPAVAYLASTFRADAGVVISASHNPFYDNGIKFFSNTGTKLNDAQELEIEALLEQALEHNALQCVASEKLGKVRRIDDAAGRYIEFCKGTFPNHLSLAGLKIVVDSAHGAAYHIAPNVYRELGAEVISINDKPNGVNINDHCGATHLDSLQSAVMIHEADLGIALDGDADRVMFVDHNGHVVDGDEILFILAQAAYQKGEMQGGVVGTLMSNLGLELALKGMDIPFVRAKVGDRYVVEQLKETGWQLGGEGSGHILSLKHASTGDGIVASLQVLKAVLESGKRLAELKAEMTKLPQVLINVRLTSGCADSILSKDSVKQAVIAAEEVLGNQGRVLLRKSGTEPLIRVMVESTDISLTQQQAEYIAQAVKVA</sequence>
<name>GLMM2_SHESM</name>
<keyword id="KW-0413">Isomerase</keyword>
<keyword id="KW-0460">Magnesium</keyword>
<keyword id="KW-0479">Metal-binding</keyword>
<keyword id="KW-0597">Phosphoprotein</keyword>
<comment type="function">
    <text evidence="1">Catalyzes the conversion of glucosamine-6-phosphate to glucosamine-1-phosphate.</text>
</comment>
<comment type="catalytic activity">
    <reaction evidence="1">
        <text>alpha-D-glucosamine 1-phosphate = D-glucosamine 6-phosphate</text>
        <dbReference type="Rhea" id="RHEA:23424"/>
        <dbReference type="ChEBI" id="CHEBI:58516"/>
        <dbReference type="ChEBI" id="CHEBI:58725"/>
        <dbReference type="EC" id="5.4.2.10"/>
    </reaction>
</comment>
<comment type="cofactor">
    <cofactor evidence="1">
        <name>Mg(2+)</name>
        <dbReference type="ChEBI" id="CHEBI:18420"/>
    </cofactor>
    <text evidence="1">Binds 1 Mg(2+) ion per subunit.</text>
</comment>
<comment type="PTM">
    <text evidence="1">Activated by phosphorylation.</text>
</comment>
<comment type="similarity">
    <text evidence="1">Belongs to the phosphohexose mutase family.</text>
</comment>
<reference key="1">
    <citation type="submission" date="2006-08" db="EMBL/GenBank/DDBJ databases">
        <title>Complete sequence of Shewanella sp. MR-4.</title>
        <authorList>
            <consortium name="US DOE Joint Genome Institute"/>
            <person name="Copeland A."/>
            <person name="Lucas S."/>
            <person name="Lapidus A."/>
            <person name="Barry K."/>
            <person name="Detter J.C."/>
            <person name="Glavina del Rio T."/>
            <person name="Hammon N."/>
            <person name="Israni S."/>
            <person name="Dalin E."/>
            <person name="Tice H."/>
            <person name="Pitluck S."/>
            <person name="Kiss H."/>
            <person name="Brettin T."/>
            <person name="Bruce D."/>
            <person name="Han C."/>
            <person name="Tapia R."/>
            <person name="Gilna P."/>
            <person name="Schmutz J."/>
            <person name="Larimer F."/>
            <person name="Land M."/>
            <person name="Hauser L."/>
            <person name="Kyrpides N."/>
            <person name="Mikhailova N."/>
            <person name="Nealson K."/>
            <person name="Konstantinidis K."/>
            <person name="Klappenbach J."/>
            <person name="Tiedje J."/>
            <person name="Richardson P."/>
        </authorList>
    </citation>
    <scope>NUCLEOTIDE SEQUENCE [LARGE SCALE GENOMIC DNA]</scope>
    <source>
        <strain>MR-4</strain>
    </source>
</reference>
<accession>Q0HKK5</accession>
<gene>
    <name evidence="1" type="primary">glmM2</name>
    <name type="ordered locus">Shewmr4_1333</name>
</gene>